<name>3SOFB_NAJHH</name>
<keyword id="KW-0903">Direct protein sequencing</keyword>
<keyword id="KW-1015">Disulfide bond</keyword>
<keyword id="KW-0472">Membrane</keyword>
<keyword id="KW-0964">Secreted</keyword>
<keyword id="KW-1052">Target cell membrane</keyword>
<keyword id="KW-1053">Target membrane</keyword>
<keyword id="KW-0800">Toxin</keyword>
<evidence type="ECO:0000250" key="1">
    <source>
        <dbReference type="UniProtKB" id="P14541"/>
    </source>
</evidence>
<evidence type="ECO:0000250" key="2">
    <source>
        <dbReference type="UniProtKB" id="P60301"/>
    </source>
</evidence>
<evidence type="ECO:0000250" key="3">
    <source>
        <dbReference type="UniProtKB" id="P62375"/>
    </source>
</evidence>
<evidence type="ECO:0000269" key="4">
    <source>
    </source>
</evidence>
<evidence type="ECO:0000303" key="5">
    <source>
    </source>
</evidence>
<evidence type="ECO:0000305" key="6"/>
<proteinExistence type="evidence at protein level"/>
<comment type="function">
    <text evidence="1">Has low cytotoxic activity.</text>
</comment>
<comment type="subcellular location">
    <subcellularLocation>
        <location evidence="4">Secreted</location>
    </subcellularLocation>
    <subcellularLocation>
        <location evidence="3">Target cell membrane</location>
    </subcellularLocation>
</comment>
<comment type="tissue specificity">
    <text evidence="6">Expressed by the venom gland.</text>
</comment>
<comment type="toxic dose">
    <text evidence="4">LD(50) is 25.2 mg/kg by intravenous injection.</text>
</comment>
<comment type="miscellaneous">
    <text evidence="6">Is classified as a P-type cytotoxin, since a proline residue stands at position 31 (Pro-31 in standard classification).</text>
</comment>
<comment type="similarity">
    <text evidence="6">Belongs to the three-finger toxin family. Short-chain subfamily. Orphan group XV sub-subfamily.</text>
</comment>
<dbReference type="SMR" id="P62394"/>
<dbReference type="GO" id="GO:0005576">
    <property type="term" value="C:extracellular region"/>
    <property type="evidence" value="ECO:0007669"/>
    <property type="project" value="UniProtKB-SubCell"/>
</dbReference>
<dbReference type="GO" id="GO:0016020">
    <property type="term" value="C:membrane"/>
    <property type="evidence" value="ECO:0007669"/>
    <property type="project" value="UniProtKB-KW"/>
</dbReference>
<dbReference type="GO" id="GO:0044218">
    <property type="term" value="C:other organism cell membrane"/>
    <property type="evidence" value="ECO:0007669"/>
    <property type="project" value="UniProtKB-KW"/>
</dbReference>
<dbReference type="GO" id="GO:0090729">
    <property type="term" value="F:toxin activity"/>
    <property type="evidence" value="ECO:0007669"/>
    <property type="project" value="UniProtKB-KW"/>
</dbReference>
<dbReference type="CDD" id="cd00206">
    <property type="entry name" value="TFP_snake_toxin"/>
    <property type="match status" value="1"/>
</dbReference>
<dbReference type="FunFam" id="2.10.60.10:FF:000024">
    <property type="entry name" value="Cytotoxin 1"/>
    <property type="match status" value="1"/>
</dbReference>
<dbReference type="Gene3D" id="2.10.60.10">
    <property type="entry name" value="CD59"/>
    <property type="match status" value="1"/>
</dbReference>
<dbReference type="InterPro" id="IPR003572">
    <property type="entry name" value="Cytotoxin_Cobra"/>
</dbReference>
<dbReference type="InterPro" id="IPR003571">
    <property type="entry name" value="Snake_3FTx"/>
</dbReference>
<dbReference type="InterPro" id="IPR045860">
    <property type="entry name" value="Snake_toxin-like_sf"/>
</dbReference>
<dbReference type="InterPro" id="IPR018354">
    <property type="entry name" value="Snake_toxin_con_site"/>
</dbReference>
<dbReference type="InterPro" id="IPR054131">
    <property type="entry name" value="Toxin_cobra-type"/>
</dbReference>
<dbReference type="Pfam" id="PF21947">
    <property type="entry name" value="Toxin_cobra-type"/>
    <property type="match status" value="1"/>
</dbReference>
<dbReference type="PRINTS" id="PR00282">
    <property type="entry name" value="CYTOTOXIN"/>
</dbReference>
<dbReference type="SUPFAM" id="SSF57302">
    <property type="entry name" value="Snake toxin-like"/>
    <property type="match status" value="1"/>
</dbReference>
<dbReference type="PROSITE" id="PS00272">
    <property type="entry name" value="SNAKE_TOXIN"/>
    <property type="match status" value="1"/>
</dbReference>
<feature type="chain" id="PRO_0000093497" description="Cytotoxin 11" evidence="4">
    <location>
        <begin position="1"/>
        <end position="62"/>
    </location>
</feature>
<feature type="disulfide bond" evidence="2">
    <location>
        <begin position="3"/>
        <end position="22"/>
    </location>
</feature>
<feature type="disulfide bond" evidence="2">
    <location>
        <begin position="15"/>
        <end position="40"/>
    </location>
</feature>
<feature type="disulfide bond" evidence="2">
    <location>
        <begin position="44"/>
        <end position="55"/>
    </location>
</feature>
<feature type="disulfide bond" evidence="2">
    <location>
        <begin position="56"/>
        <end position="61"/>
    </location>
</feature>
<organism>
    <name type="scientific">Naja haje haje</name>
    <name type="common">Egyptian cobra</name>
    <dbReference type="NCBI Taxonomy" id="8642"/>
    <lineage>
        <taxon>Eukaryota</taxon>
        <taxon>Metazoa</taxon>
        <taxon>Chordata</taxon>
        <taxon>Craniata</taxon>
        <taxon>Vertebrata</taxon>
        <taxon>Euteleostomi</taxon>
        <taxon>Lepidosauria</taxon>
        <taxon>Squamata</taxon>
        <taxon>Bifurcata</taxon>
        <taxon>Unidentata</taxon>
        <taxon>Episquamata</taxon>
        <taxon>Toxicofera</taxon>
        <taxon>Serpentes</taxon>
        <taxon>Colubroidea</taxon>
        <taxon>Elapidae</taxon>
        <taxon>Elapinae</taxon>
        <taxon>Naja</taxon>
    </lineage>
</organism>
<reference key="1">
    <citation type="journal article" date="1978" name="Eur. J. Biochem.">
        <title>Naja haje haje (Egyptian cobra) venom. Some properties and the complete primary structure of three toxins (CM-2, CM-11 and CM-12).</title>
        <authorList>
            <person name="Joubert F.J."/>
            <person name="Taljaard N."/>
        </authorList>
    </citation>
    <scope>PROTEIN SEQUENCE</scope>
    <scope>TOXIC DOSE</scope>
    <scope>SUBCELLULAR LOCATION</scope>
    <source>
        <tissue>Venom</tissue>
    </source>
</reference>
<accession>P62394</accession>
<accession>P01472</accession>
<sequence>LKCHNTQLPFIYKTCPEGKNLCFKTTLKKLPLKIPIKRGCAATCPKSSALLKVVCCSTDKCN</sequence>
<protein>
    <recommendedName>
        <fullName>Cytotoxin 11</fullName>
    </recommendedName>
    <alternativeName>
        <fullName evidence="5">Toxin CM-12</fullName>
    </alternativeName>
</protein>